<reference key="1">
    <citation type="journal article" date="2009" name="Infect. Immun.">
        <title>Comparative genomics reveal extensive transposon-mediated genomic plasticity and diversity among potential effector proteins within the genus Coxiella.</title>
        <authorList>
            <person name="Beare P.A."/>
            <person name="Unsworth N."/>
            <person name="Andoh M."/>
            <person name="Voth D.E."/>
            <person name="Omsland A."/>
            <person name="Gilk S.D."/>
            <person name="Williams K.P."/>
            <person name="Sobral B.W."/>
            <person name="Kupko J.J. III"/>
            <person name="Porcella S.F."/>
            <person name="Samuel J.E."/>
            <person name="Heinzen R.A."/>
        </authorList>
    </citation>
    <scope>NUCLEOTIDE SEQUENCE [LARGE SCALE GENOMIC DNA]</scope>
    <source>
        <strain>CbuG_Q212</strain>
    </source>
</reference>
<sequence length="303" mass="33514">MIKQRTLKNVVRATGVGVHTGEKVYLTLRPAPPNTGIIFCRTDLDPVVQIPARVNYIGDTSLSTCLTKGDVRIATVEHLLSALAGVGVDNLYIDLTSPELPIMDGSAGPFVFLIQSAGIEEQNAPKEFIRIKQRVKIEEADKSVMVEPYNGFKISFGIDFDHPLFNEHNQNATLDFSSTSYVKEVSRARTFGFLSDYEFIRKNNLALGASLDNALVLDEYKILNQDGLRYPDEFVKHKILDVIGDLYLLGRSLIGSFSGVKSGHTLNSQLLKQLLATKSAWEIVTFKDPSELPFAYTPVAMTA</sequence>
<comment type="function">
    <text evidence="1">Catalyzes the hydrolysis of UDP-3-O-myristoyl-N-acetylglucosamine to form UDP-3-O-myristoylglucosamine and acetate, the committed step in lipid A biosynthesis.</text>
</comment>
<comment type="catalytic activity">
    <reaction evidence="1">
        <text>a UDP-3-O-[(3R)-3-hydroxyacyl]-N-acetyl-alpha-D-glucosamine + H2O = a UDP-3-O-[(3R)-3-hydroxyacyl]-alpha-D-glucosamine + acetate</text>
        <dbReference type="Rhea" id="RHEA:67816"/>
        <dbReference type="ChEBI" id="CHEBI:15377"/>
        <dbReference type="ChEBI" id="CHEBI:30089"/>
        <dbReference type="ChEBI" id="CHEBI:137740"/>
        <dbReference type="ChEBI" id="CHEBI:173225"/>
        <dbReference type="EC" id="3.5.1.108"/>
    </reaction>
</comment>
<comment type="cofactor">
    <cofactor evidence="1">
        <name>Zn(2+)</name>
        <dbReference type="ChEBI" id="CHEBI:29105"/>
    </cofactor>
</comment>
<comment type="pathway">
    <text evidence="1">Glycolipid biosynthesis; lipid IV(A) biosynthesis; lipid IV(A) from (3R)-3-hydroxytetradecanoyl-[acyl-carrier-protein] and UDP-N-acetyl-alpha-D-glucosamine: step 2/6.</text>
</comment>
<comment type="similarity">
    <text evidence="1">Belongs to the LpxC family.</text>
</comment>
<keyword id="KW-0378">Hydrolase</keyword>
<keyword id="KW-0441">Lipid A biosynthesis</keyword>
<keyword id="KW-0444">Lipid biosynthesis</keyword>
<keyword id="KW-0443">Lipid metabolism</keyword>
<keyword id="KW-0479">Metal-binding</keyword>
<keyword id="KW-0862">Zinc</keyword>
<feature type="chain" id="PRO_1000122775" description="UDP-3-O-acyl-N-acetylglucosamine deacetylase">
    <location>
        <begin position="1"/>
        <end position="303"/>
    </location>
</feature>
<feature type="active site" description="Proton donor" evidence="1">
    <location>
        <position position="264"/>
    </location>
</feature>
<feature type="binding site" evidence="1">
    <location>
        <position position="78"/>
    </location>
    <ligand>
        <name>Zn(2+)</name>
        <dbReference type="ChEBI" id="CHEBI:29105"/>
    </ligand>
</feature>
<feature type="binding site" evidence="1">
    <location>
        <position position="237"/>
    </location>
    <ligand>
        <name>Zn(2+)</name>
        <dbReference type="ChEBI" id="CHEBI:29105"/>
    </ligand>
</feature>
<feature type="binding site" evidence="1">
    <location>
        <position position="241"/>
    </location>
    <ligand>
        <name>Zn(2+)</name>
        <dbReference type="ChEBI" id="CHEBI:29105"/>
    </ligand>
</feature>
<name>LPXC_COXB2</name>
<accession>B6J2P6</accession>
<evidence type="ECO:0000255" key="1">
    <source>
        <dbReference type="HAMAP-Rule" id="MF_00388"/>
    </source>
</evidence>
<gene>
    <name evidence="1" type="primary">lpxC</name>
    <name type="ordered locus">CbuG_1874</name>
</gene>
<dbReference type="EC" id="3.5.1.108" evidence="1"/>
<dbReference type="EMBL" id="CP001019">
    <property type="protein sequence ID" value="ACJ19123.1"/>
    <property type="molecule type" value="Genomic_DNA"/>
</dbReference>
<dbReference type="RefSeq" id="WP_010957401.1">
    <property type="nucleotide sequence ID" value="NC_011527.1"/>
</dbReference>
<dbReference type="SMR" id="B6J2P6"/>
<dbReference type="KEGG" id="cbg:CbuG_1874"/>
<dbReference type="HOGENOM" id="CLU_046528_1_0_6"/>
<dbReference type="UniPathway" id="UPA00359">
    <property type="reaction ID" value="UER00478"/>
</dbReference>
<dbReference type="GO" id="GO:0016020">
    <property type="term" value="C:membrane"/>
    <property type="evidence" value="ECO:0007669"/>
    <property type="project" value="GOC"/>
</dbReference>
<dbReference type="GO" id="GO:0046872">
    <property type="term" value="F:metal ion binding"/>
    <property type="evidence" value="ECO:0007669"/>
    <property type="project" value="UniProtKB-KW"/>
</dbReference>
<dbReference type="GO" id="GO:0103117">
    <property type="term" value="F:UDP-3-O-acyl-N-acetylglucosamine deacetylase activity"/>
    <property type="evidence" value="ECO:0007669"/>
    <property type="project" value="UniProtKB-UniRule"/>
</dbReference>
<dbReference type="GO" id="GO:0009245">
    <property type="term" value="P:lipid A biosynthetic process"/>
    <property type="evidence" value="ECO:0007669"/>
    <property type="project" value="UniProtKB-UniRule"/>
</dbReference>
<dbReference type="Gene3D" id="3.30.230.20">
    <property type="entry name" value="lpxc deacetylase, domain 1"/>
    <property type="match status" value="1"/>
</dbReference>
<dbReference type="Gene3D" id="3.30.1700.10">
    <property type="entry name" value="lpxc deacetylase, domain 2"/>
    <property type="match status" value="1"/>
</dbReference>
<dbReference type="HAMAP" id="MF_00388">
    <property type="entry name" value="LpxC"/>
    <property type="match status" value="1"/>
</dbReference>
<dbReference type="InterPro" id="IPR020568">
    <property type="entry name" value="Ribosomal_Su5_D2-typ_SF"/>
</dbReference>
<dbReference type="InterPro" id="IPR004463">
    <property type="entry name" value="UDP-acyl_GlcNac_deAcase"/>
</dbReference>
<dbReference type="InterPro" id="IPR011334">
    <property type="entry name" value="UDP-acyl_GlcNac_deAcase_C"/>
</dbReference>
<dbReference type="InterPro" id="IPR015870">
    <property type="entry name" value="UDP-acyl_N-AcGlcN_deAcase_N"/>
</dbReference>
<dbReference type="NCBIfam" id="TIGR00325">
    <property type="entry name" value="lpxC"/>
    <property type="match status" value="1"/>
</dbReference>
<dbReference type="PANTHER" id="PTHR33694">
    <property type="entry name" value="UDP-3-O-ACYL-N-ACETYLGLUCOSAMINE DEACETYLASE 1, MITOCHONDRIAL-RELATED"/>
    <property type="match status" value="1"/>
</dbReference>
<dbReference type="PANTHER" id="PTHR33694:SF1">
    <property type="entry name" value="UDP-3-O-ACYL-N-ACETYLGLUCOSAMINE DEACETYLASE 1, MITOCHONDRIAL-RELATED"/>
    <property type="match status" value="1"/>
</dbReference>
<dbReference type="Pfam" id="PF03331">
    <property type="entry name" value="LpxC"/>
    <property type="match status" value="1"/>
</dbReference>
<dbReference type="SUPFAM" id="SSF54211">
    <property type="entry name" value="Ribosomal protein S5 domain 2-like"/>
    <property type="match status" value="2"/>
</dbReference>
<proteinExistence type="inferred from homology"/>
<organism>
    <name type="scientific">Coxiella burnetii (strain CbuG_Q212)</name>
    <name type="common">Coxiella burnetii (strain Q212)</name>
    <dbReference type="NCBI Taxonomy" id="434923"/>
    <lineage>
        <taxon>Bacteria</taxon>
        <taxon>Pseudomonadati</taxon>
        <taxon>Pseudomonadota</taxon>
        <taxon>Gammaproteobacteria</taxon>
        <taxon>Legionellales</taxon>
        <taxon>Coxiellaceae</taxon>
        <taxon>Coxiella</taxon>
    </lineage>
</organism>
<protein>
    <recommendedName>
        <fullName evidence="1">UDP-3-O-acyl-N-acetylglucosamine deacetylase</fullName>
        <shortName evidence="1">UDP-3-O-acyl-GlcNAc deacetylase</shortName>
        <ecNumber evidence="1">3.5.1.108</ecNumber>
    </recommendedName>
    <alternativeName>
        <fullName evidence="1">UDP-3-O-[R-3-hydroxymyristoyl]-N-acetylglucosamine deacetylase</fullName>
    </alternativeName>
</protein>